<name>RL13_PEDPA</name>
<reference key="1">
    <citation type="journal article" date="2006" name="Proc. Natl. Acad. Sci. U.S.A.">
        <title>Comparative genomics of the lactic acid bacteria.</title>
        <authorList>
            <person name="Makarova K.S."/>
            <person name="Slesarev A."/>
            <person name="Wolf Y.I."/>
            <person name="Sorokin A."/>
            <person name="Mirkin B."/>
            <person name="Koonin E.V."/>
            <person name="Pavlov A."/>
            <person name="Pavlova N."/>
            <person name="Karamychev V."/>
            <person name="Polouchine N."/>
            <person name="Shakhova V."/>
            <person name="Grigoriev I."/>
            <person name="Lou Y."/>
            <person name="Rohksar D."/>
            <person name="Lucas S."/>
            <person name="Huang K."/>
            <person name="Goodstein D.M."/>
            <person name="Hawkins T."/>
            <person name="Plengvidhya V."/>
            <person name="Welker D."/>
            <person name="Hughes J."/>
            <person name="Goh Y."/>
            <person name="Benson A."/>
            <person name="Baldwin K."/>
            <person name="Lee J.-H."/>
            <person name="Diaz-Muniz I."/>
            <person name="Dosti B."/>
            <person name="Smeianov V."/>
            <person name="Wechter W."/>
            <person name="Barabote R."/>
            <person name="Lorca G."/>
            <person name="Altermann E."/>
            <person name="Barrangou R."/>
            <person name="Ganesan B."/>
            <person name="Xie Y."/>
            <person name="Rawsthorne H."/>
            <person name="Tamir D."/>
            <person name="Parker C."/>
            <person name="Breidt F."/>
            <person name="Broadbent J.R."/>
            <person name="Hutkins R."/>
            <person name="O'Sullivan D."/>
            <person name="Steele J."/>
            <person name="Unlu G."/>
            <person name="Saier M.H. Jr."/>
            <person name="Klaenhammer T."/>
            <person name="Richardson P."/>
            <person name="Kozyavkin S."/>
            <person name="Weimer B.C."/>
            <person name="Mills D.A."/>
        </authorList>
    </citation>
    <scope>NUCLEOTIDE SEQUENCE [LARGE SCALE GENOMIC DNA]</scope>
    <source>
        <strain>ATCC 25745 / CCUG 21536 / LMG 10740 / 183-1w</strain>
    </source>
</reference>
<gene>
    <name evidence="1" type="primary">rplM</name>
    <name type="ordered locus">PEPE_1386</name>
</gene>
<comment type="function">
    <text evidence="1">This protein is one of the early assembly proteins of the 50S ribosomal subunit, although it is not seen to bind rRNA by itself. It is important during the early stages of 50S assembly.</text>
</comment>
<comment type="subunit">
    <text evidence="1">Part of the 50S ribosomal subunit.</text>
</comment>
<comment type="similarity">
    <text evidence="1">Belongs to the universal ribosomal protein uL13 family.</text>
</comment>
<evidence type="ECO:0000255" key="1">
    <source>
        <dbReference type="HAMAP-Rule" id="MF_01366"/>
    </source>
</evidence>
<evidence type="ECO:0000305" key="2"/>
<feature type="chain" id="PRO_1000055430" description="Large ribosomal subunit protein uL13">
    <location>
        <begin position="1"/>
        <end position="147"/>
    </location>
</feature>
<accession>Q03EE8</accession>
<dbReference type="EMBL" id="CP000422">
    <property type="protein sequence ID" value="ABJ68424.1"/>
    <property type="molecule type" value="Genomic_DNA"/>
</dbReference>
<dbReference type="RefSeq" id="WP_002833358.1">
    <property type="nucleotide sequence ID" value="NC_008525.1"/>
</dbReference>
<dbReference type="SMR" id="Q03EE8"/>
<dbReference type="STRING" id="278197.PEPE_1386"/>
<dbReference type="GeneID" id="33061270"/>
<dbReference type="KEGG" id="ppe:PEPE_1386"/>
<dbReference type="eggNOG" id="COG0102">
    <property type="taxonomic scope" value="Bacteria"/>
</dbReference>
<dbReference type="HOGENOM" id="CLU_082184_2_2_9"/>
<dbReference type="OrthoDB" id="9801330at2"/>
<dbReference type="Proteomes" id="UP000000773">
    <property type="component" value="Chromosome"/>
</dbReference>
<dbReference type="GO" id="GO:0022625">
    <property type="term" value="C:cytosolic large ribosomal subunit"/>
    <property type="evidence" value="ECO:0007669"/>
    <property type="project" value="TreeGrafter"/>
</dbReference>
<dbReference type="GO" id="GO:0003729">
    <property type="term" value="F:mRNA binding"/>
    <property type="evidence" value="ECO:0007669"/>
    <property type="project" value="TreeGrafter"/>
</dbReference>
<dbReference type="GO" id="GO:0003735">
    <property type="term" value="F:structural constituent of ribosome"/>
    <property type="evidence" value="ECO:0007669"/>
    <property type="project" value="InterPro"/>
</dbReference>
<dbReference type="GO" id="GO:0017148">
    <property type="term" value="P:negative regulation of translation"/>
    <property type="evidence" value="ECO:0007669"/>
    <property type="project" value="TreeGrafter"/>
</dbReference>
<dbReference type="GO" id="GO:0006412">
    <property type="term" value="P:translation"/>
    <property type="evidence" value="ECO:0007669"/>
    <property type="project" value="UniProtKB-UniRule"/>
</dbReference>
<dbReference type="CDD" id="cd00392">
    <property type="entry name" value="Ribosomal_L13"/>
    <property type="match status" value="1"/>
</dbReference>
<dbReference type="FunFam" id="3.90.1180.10:FF:000001">
    <property type="entry name" value="50S ribosomal protein L13"/>
    <property type="match status" value="1"/>
</dbReference>
<dbReference type="Gene3D" id="3.90.1180.10">
    <property type="entry name" value="Ribosomal protein L13"/>
    <property type="match status" value="1"/>
</dbReference>
<dbReference type="HAMAP" id="MF_01366">
    <property type="entry name" value="Ribosomal_uL13"/>
    <property type="match status" value="1"/>
</dbReference>
<dbReference type="InterPro" id="IPR005822">
    <property type="entry name" value="Ribosomal_uL13"/>
</dbReference>
<dbReference type="InterPro" id="IPR005823">
    <property type="entry name" value="Ribosomal_uL13_bac-type"/>
</dbReference>
<dbReference type="InterPro" id="IPR023563">
    <property type="entry name" value="Ribosomal_uL13_CS"/>
</dbReference>
<dbReference type="InterPro" id="IPR036899">
    <property type="entry name" value="Ribosomal_uL13_sf"/>
</dbReference>
<dbReference type="NCBIfam" id="TIGR01066">
    <property type="entry name" value="rplM_bact"/>
    <property type="match status" value="1"/>
</dbReference>
<dbReference type="PANTHER" id="PTHR11545:SF2">
    <property type="entry name" value="LARGE RIBOSOMAL SUBUNIT PROTEIN UL13M"/>
    <property type="match status" value="1"/>
</dbReference>
<dbReference type="PANTHER" id="PTHR11545">
    <property type="entry name" value="RIBOSOMAL PROTEIN L13"/>
    <property type="match status" value="1"/>
</dbReference>
<dbReference type="Pfam" id="PF00572">
    <property type="entry name" value="Ribosomal_L13"/>
    <property type="match status" value="1"/>
</dbReference>
<dbReference type="PIRSF" id="PIRSF002181">
    <property type="entry name" value="Ribosomal_L13"/>
    <property type="match status" value="1"/>
</dbReference>
<dbReference type="SUPFAM" id="SSF52161">
    <property type="entry name" value="Ribosomal protein L13"/>
    <property type="match status" value="1"/>
</dbReference>
<dbReference type="PROSITE" id="PS00783">
    <property type="entry name" value="RIBOSOMAL_L13"/>
    <property type="match status" value="1"/>
</dbReference>
<sequence>MRTTYLAKPGEVERKWYIVDATDIPLGRLSTVVASILRGKNKPTFTPNVDTGDFVIVINAEKIKLTGRKATGKIYYHHTLHPGGIKSKTAGEMREKTPERLIETSIKGMLPHNTLGRKQALKLHVYAGSEHNQQAQNPEKLDITNLI</sequence>
<proteinExistence type="inferred from homology"/>
<keyword id="KW-0687">Ribonucleoprotein</keyword>
<keyword id="KW-0689">Ribosomal protein</keyword>
<organism>
    <name type="scientific">Pediococcus pentosaceus (strain ATCC 25745 / CCUG 21536 / LMG 10740 / 183-1w)</name>
    <dbReference type="NCBI Taxonomy" id="278197"/>
    <lineage>
        <taxon>Bacteria</taxon>
        <taxon>Bacillati</taxon>
        <taxon>Bacillota</taxon>
        <taxon>Bacilli</taxon>
        <taxon>Lactobacillales</taxon>
        <taxon>Lactobacillaceae</taxon>
        <taxon>Pediococcus</taxon>
    </lineage>
</organism>
<protein>
    <recommendedName>
        <fullName evidence="1">Large ribosomal subunit protein uL13</fullName>
    </recommendedName>
    <alternativeName>
        <fullName evidence="2">50S ribosomal protein L13</fullName>
    </alternativeName>
</protein>